<feature type="chain" id="PRO_0000160510" description="ATP-dependent protease ATPase subunit HslU">
    <location>
        <begin position="1"/>
        <end position="443"/>
    </location>
</feature>
<feature type="binding site" evidence="1">
    <location>
        <position position="20"/>
    </location>
    <ligand>
        <name>ATP</name>
        <dbReference type="ChEBI" id="CHEBI:30616"/>
    </ligand>
</feature>
<feature type="binding site" evidence="1">
    <location>
        <begin position="62"/>
        <end position="67"/>
    </location>
    <ligand>
        <name>ATP</name>
        <dbReference type="ChEBI" id="CHEBI:30616"/>
    </ligand>
</feature>
<feature type="binding site" evidence="1">
    <location>
        <position position="255"/>
    </location>
    <ligand>
        <name>ATP</name>
        <dbReference type="ChEBI" id="CHEBI:30616"/>
    </ligand>
</feature>
<feature type="binding site" evidence="1">
    <location>
        <position position="321"/>
    </location>
    <ligand>
        <name>ATP</name>
        <dbReference type="ChEBI" id="CHEBI:30616"/>
    </ligand>
</feature>
<feature type="binding site" evidence="1">
    <location>
        <position position="393"/>
    </location>
    <ligand>
        <name>ATP</name>
        <dbReference type="ChEBI" id="CHEBI:30616"/>
    </ligand>
</feature>
<accession>Q9ZLW1</accession>
<sequence length="443" mass="50164">MSKLNMTPREIVAYLDEYIIEQKEAKKFIAIALRNRYRRLQLEKSLQEEITPKNILMIGSTGVGKTEIARRMAKIMKLPFVKVEASKYTEVGFVGRDVESMVRDLVNNSVLLVENEHKERLKDKIEEAVVEKIAKKLLPPLPSGVSEEKKQEYANSLLKMQQRIAQGELDSREIEIEVRKKSIEIDSNVPPEILRVQENLIKVFHKEQDKVKKTLSVKEAKEALKAEISDTLLDGEAIKMEGLKRAESSGVIFIDEIDKIAVSSKEGSRQDPSKEGVQRDLLPIVEGSVVNTKYGSIKTEHILFIAAGAFHLSKPSDLIPELQGRFPLRVELENLTEEIMYMILTQTKTSIIKQYQALLKVEGVEIAFEDDAIKELAKLSYNANQKSEDIGARRLHTTIEKVLEDISFEAEDYSGQSVTITKELVQSKLGDLVADENLVKYIL</sequence>
<keyword id="KW-0067">ATP-binding</keyword>
<keyword id="KW-0143">Chaperone</keyword>
<keyword id="KW-0963">Cytoplasm</keyword>
<keyword id="KW-0547">Nucleotide-binding</keyword>
<organism>
    <name type="scientific">Helicobacter pylori (strain J99 / ATCC 700824)</name>
    <name type="common">Campylobacter pylori J99</name>
    <dbReference type="NCBI Taxonomy" id="85963"/>
    <lineage>
        <taxon>Bacteria</taxon>
        <taxon>Pseudomonadati</taxon>
        <taxon>Campylobacterota</taxon>
        <taxon>Epsilonproteobacteria</taxon>
        <taxon>Campylobacterales</taxon>
        <taxon>Helicobacteraceae</taxon>
        <taxon>Helicobacter</taxon>
    </lineage>
</organism>
<reference key="1">
    <citation type="journal article" date="1999" name="Nature">
        <title>Genomic sequence comparison of two unrelated isolates of the human gastric pathogen Helicobacter pylori.</title>
        <authorList>
            <person name="Alm R.A."/>
            <person name="Ling L.-S.L."/>
            <person name="Moir D.T."/>
            <person name="King B.L."/>
            <person name="Brown E.D."/>
            <person name="Doig P.C."/>
            <person name="Smith D.R."/>
            <person name="Noonan B."/>
            <person name="Guild B.C."/>
            <person name="deJonge B.L."/>
            <person name="Carmel G."/>
            <person name="Tummino P.J."/>
            <person name="Caruso A."/>
            <person name="Uria-Nickelsen M."/>
            <person name="Mills D.M."/>
            <person name="Ives C."/>
            <person name="Gibson R."/>
            <person name="Merberg D."/>
            <person name="Mills S.D."/>
            <person name="Jiang Q."/>
            <person name="Taylor D.E."/>
            <person name="Vovis G.F."/>
            <person name="Trust T.J."/>
        </authorList>
    </citation>
    <scope>NUCLEOTIDE SEQUENCE [LARGE SCALE GENOMIC DNA]</scope>
    <source>
        <strain>J99 / ATCC 700824</strain>
    </source>
</reference>
<name>HSLU_HELPJ</name>
<comment type="function">
    <text evidence="1">ATPase subunit of a proteasome-like degradation complex; this subunit has chaperone activity. The binding of ATP and its subsequent hydrolysis by HslU are essential for unfolding of protein substrates subsequently hydrolyzed by HslV. HslU recognizes the N-terminal part of its protein substrates and unfolds these before they are guided to HslV for hydrolysis.</text>
</comment>
<comment type="subunit">
    <text evidence="1">A double ring-shaped homohexamer of HslV is capped on each side by a ring-shaped HslU homohexamer. The assembly of the HslU/HslV complex is dependent on binding of ATP.</text>
</comment>
<comment type="subcellular location">
    <subcellularLocation>
        <location evidence="1">Cytoplasm</location>
    </subcellularLocation>
</comment>
<comment type="similarity">
    <text evidence="1">Belongs to the ClpX chaperone family. HslU subfamily.</text>
</comment>
<proteinExistence type="inferred from homology"/>
<dbReference type="EMBL" id="AE001439">
    <property type="protein sequence ID" value="AAD06034.1"/>
    <property type="molecule type" value="Genomic_DNA"/>
</dbReference>
<dbReference type="PIR" id="F71929">
    <property type="entry name" value="F71929"/>
</dbReference>
<dbReference type="RefSeq" id="WP_000040747.1">
    <property type="nucleotide sequence ID" value="NC_000921.1"/>
</dbReference>
<dbReference type="SMR" id="Q9ZLW1"/>
<dbReference type="KEGG" id="hpj:jhp_0465"/>
<dbReference type="PATRIC" id="fig|85963.30.peg.537"/>
<dbReference type="eggNOG" id="COG1220">
    <property type="taxonomic scope" value="Bacteria"/>
</dbReference>
<dbReference type="Proteomes" id="UP000000804">
    <property type="component" value="Chromosome"/>
</dbReference>
<dbReference type="GO" id="GO:0009376">
    <property type="term" value="C:HslUV protease complex"/>
    <property type="evidence" value="ECO:0007669"/>
    <property type="project" value="UniProtKB-UniRule"/>
</dbReference>
<dbReference type="GO" id="GO:0005524">
    <property type="term" value="F:ATP binding"/>
    <property type="evidence" value="ECO:0007669"/>
    <property type="project" value="UniProtKB-UniRule"/>
</dbReference>
<dbReference type="GO" id="GO:0016887">
    <property type="term" value="F:ATP hydrolysis activity"/>
    <property type="evidence" value="ECO:0007669"/>
    <property type="project" value="InterPro"/>
</dbReference>
<dbReference type="GO" id="GO:0008233">
    <property type="term" value="F:peptidase activity"/>
    <property type="evidence" value="ECO:0007669"/>
    <property type="project" value="InterPro"/>
</dbReference>
<dbReference type="GO" id="GO:0036402">
    <property type="term" value="F:proteasome-activating activity"/>
    <property type="evidence" value="ECO:0007669"/>
    <property type="project" value="UniProtKB-UniRule"/>
</dbReference>
<dbReference type="GO" id="GO:0043335">
    <property type="term" value="P:protein unfolding"/>
    <property type="evidence" value="ECO:0007669"/>
    <property type="project" value="UniProtKB-UniRule"/>
</dbReference>
<dbReference type="GO" id="GO:0051603">
    <property type="term" value="P:proteolysis involved in protein catabolic process"/>
    <property type="evidence" value="ECO:0007669"/>
    <property type="project" value="TreeGrafter"/>
</dbReference>
<dbReference type="CDD" id="cd19498">
    <property type="entry name" value="RecA-like_HslU"/>
    <property type="match status" value="1"/>
</dbReference>
<dbReference type="Gene3D" id="1.10.8.60">
    <property type="match status" value="1"/>
</dbReference>
<dbReference type="Gene3D" id="3.40.50.300">
    <property type="entry name" value="P-loop containing nucleotide triphosphate hydrolases"/>
    <property type="match status" value="2"/>
</dbReference>
<dbReference type="HAMAP" id="MF_00249">
    <property type="entry name" value="HslU"/>
    <property type="match status" value="1"/>
</dbReference>
<dbReference type="InterPro" id="IPR003593">
    <property type="entry name" value="AAA+_ATPase"/>
</dbReference>
<dbReference type="InterPro" id="IPR050052">
    <property type="entry name" value="ATP-dep_Clp_protease_ClpX"/>
</dbReference>
<dbReference type="InterPro" id="IPR003959">
    <property type="entry name" value="ATPase_AAA_core"/>
</dbReference>
<dbReference type="InterPro" id="IPR019489">
    <property type="entry name" value="Clp_ATPase_C"/>
</dbReference>
<dbReference type="InterPro" id="IPR004491">
    <property type="entry name" value="HslU"/>
</dbReference>
<dbReference type="InterPro" id="IPR027417">
    <property type="entry name" value="P-loop_NTPase"/>
</dbReference>
<dbReference type="NCBIfam" id="TIGR00390">
    <property type="entry name" value="hslU"/>
    <property type="match status" value="1"/>
</dbReference>
<dbReference type="NCBIfam" id="NF003544">
    <property type="entry name" value="PRK05201.1"/>
    <property type="match status" value="1"/>
</dbReference>
<dbReference type="PANTHER" id="PTHR48102">
    <property type="entry name" value="ATP-DEPENDENT CLP PROTEASE ATP-BINDING SUBUNIT CLPX-LIKE, MITOCHONDRIAL-RELATED"/>
    <property type="match status" value="1"/>
</dbReference>
<dbReference type="PANTHER" id="PTHR48102:SF3">
    <property type="entry name" value="ATP-DEPENDENT PROTEASE ATPASE SUBUNIT HSLU"/>
    <property type="match status" value="1"/>
</dbReference>
<dbReference type="Pfam" id="PF00004">
    <property type="entry name" value="AAA"/>
    <property type="match status" value="1"/>
</dbReference>
<dbReference type="Pfam" id="PF07724">
    <property type="entry name" value="AAA_2"/>
    <property type="match status" value="1"/>
</dbReference>
<dbReference type="Pfam" id="PF10431">
    <property type="entry name" value="ClpB_D2-small"/>
    <property type="match status" value="1"/>
</dbReference>
<dbReference type="SMART" id="SM00382">
    <property type="entry name" value="AAA"/>
    <property type="match status" value="1"/>
</dbReference>
<dbReference type="SMART" id="SM01086">
    <property type="entry name" value="ClpB_D2-small"/>
    <property type="match status" value="1"/>
</dbReference>
<dbReference type="SUPFAM" id="SSF52540">
    <property type="entry name" value="P-loop containing nucleoside triphosphate hydrolases"/>
    <property type="match status" value="1"/>
</dbReference>
<gene>
    <name evidence="1" type="primary">hslU</name>
    <name type="ordered locus">jhp_0465</name>
</gene>
<protein>
    <recommendedName>
        <fullName evidence="1">ATP-dependent protease ATPase subunit HslU</fullName>
    </recommendedName>
    <alternativeName>
        <fullName evidence="1">Unfoldase HslU</fullName>
    </alternativeName>
</protein>
<evidence type="ECO:0000255" key="1">
    <source>
        <dbReference type="HAMAP-Rule" id="MF_00249"/>
    </source>
</evidence>